<sequence>MKSRLQAFKQFTRFVSCKSCGVELQSKNPSVTGYYKPPRAVRKDAGTIEDLKYLMFTQELQLKKHEIGLLDPDTDPDYKEPIPKRLVCKRCVDAISHNRYNSSDFPIHSFNDIKGALPHAANVYHVVSLSDFPLSLDKTILAEKNNRNYLLLSKADQITYKSSMLPHKGSAFFAEFCRRHIGVHVKKVVLFSNPRNWNIPSVINALAKRCYLLGNPNVGKTSLINSLLHEKSTSFQAQLDKRGNVIGPPKGHEQIQSTRRRAIFNEGGVSHIPNFTRTMQTYLIEDKVVNDLPGYTMDPTKVSDLANYIEKETLDNIRKTSKFKIDKLIKQNYTSLTGSKTGKCLSFGGIFHLVPPNSTINQVVNYIPLPEHEFSNVEKAVSLSLEVLQSENHSLRQFFALKKPFTDIKMFDRHVIPPFNGAIEIVLKDIGYFQVKPTGKYGFNGLYELWVPKGIRVCIREPLSKLISKSYEKYIESGDIADVCPTDRPLISDTYIMNHTEEDTFARMREMYINRTSKDILSRRLLQKDPNDIVGTLQSPPSNLYWYYKW</sequence>
<reference key="1">
    <citation type="journal article" date="2004" name="Nature">
        <title>Genome evolution in yeasts.</title>
        <authorList>
            <person name="Dujon B."/>
            <person name="Sherman D."/>
            <person name="Fischer G."/>
            <person name="Durrens P."/>
            <person name="Casaregola S."/>
            <person name="Lafontaine I."/>
            <person name="de Montigny J."/>
            <person name="Marck C."/>
            <person name="Neuveglise C."/>
            <person name="Talla E."/>
            <person name="Goffard N."/>
            <person name="Frangeul L."/>
            <person name="Aigle M."/>
            <person name="Anthouard V."/>
            <person name="Babour A."/>
            <person name="Barbe V."/>
            <person name="Barnay S."/>
            <person name="Blanchin S."/>
            <person name="Beckerich J.-M."/>
            <person name="Beyne E."/>
            <person name="Bleykasten C."/>
            <person name="Boisrame A."/>
            <person name="Boyer J."/>
            <person name="Cattolico L."/>
            <person name="Confanioleri F."/>
            <person name="de Daruvar A."/>
            <person name="Despons L."/>
            <person name="Fabre E."/>
            <person name="Fairhead C."/>
            <person name="Ferry-Dumazet H."/>
            <person name="Groppi A."/>
            <person name="Hantraye F."/>
            <person name="Hennequin C."/>
            <person name="Jauniaux N."/>
            <person name="Joyet P."/>
            <person name="Kachouri R."/>
            <person name="Kerrest A."/>
            <person name="Koszul R."/>
            <person name="Lemaire M."/>
            <person name="Lesur I."/>
            <person name="Ma L."/>
            <person name="Muller H."/>
            <person name="Nicaud J.-M."/>
            <person name="Nikolski M."/>
            <person name="Oztas S."/>
            <person name="Ozier-Kalogeropoulos O."/>
            <person name="Pellenz S."/>
            <person name="Potier S."/>
            <person name="Richard G.-F."/>
            <person name="Straub M.-L."/>
            <person name="Suleau A."/>
            <person name="Swennen D."/>
            <person name="Tekaia F."/>
            <person name="Wesolowski-Louvel M."/>
            <person name="Westhof E."/>
            <person name="Wirth B."/>
            <person name="Zeniou-Meyer M."/>
            <person name="Zivanovic Y."/>
            <person name="Bolotin-Fukuhara M."/>
            <person name="Thierry A."/>
            <person name="Bouchier C."/>
            <person name="Caudron B."/>
            <person name="Scarpelli C."/>
            <person name="Gaillardin C."/>
            <person name="Weissenbach J."/>
            <person name="Wincker P."/>
            <person name="Souciet J.-L."/>
        </authorList>
    </citation>
    <scope>NUCLEOTIDE SEQUENCE [LARGE SCALE GENOMIC DNA]</scope>
    <source>
        <strain>ATCC 8585 / CBS 2359 / DSM 70799 / NBRC 1267 / NRRL Y-1140 / WM37</strain>
    </source>
</reference>
<protein>
    <recommendedName>
        <fullName>Genetic interactor of prohibitins 3, mitochondrial</fullName>
    </recommendedName>
    <alternativeName>
        <fullName>Found in mitochondrial proteome protein 38</fullName>
    </alternativeName>
</protein>
<evidence type="ECO:0000250" key="1"/>
<evidence type="ECO:0000255" key="2"/>
<evidence type="ECO:0000255" key="3">
    <source>
        <dbReference type="PROSITE-ProRule" id="PRU01058"/>
    </source>
</evidence>
<evidence type="ECO:0000305" key="4"/>
<feature type="transit peptide" description="Mitochondrion" evidence="2">
    <location>
        <begin position="1"/>
        <end position="43"/>
    </location>
</feature>
<feature type="chain" id="PRO_0000409635" description="Genetic interactor of prohibitins 3, mitochondrial">
    <location>
        <begin position="44"/>
        <end position="550"/>
    </location>
</feature>
<feature type="domain" description="CP-type G" evidence="3">
    <location>
        <begin position="107"/>
        <end position="298"/>
    </location>
</feature>
<keyword id="KW-0496">Mitochondrion</keyword>
<keyword id="KW-1185">Reference proteome</keyword>
<keyword id="KW-0809">Transit peptide</keyword>
<gene>
    <name type="primary">GEP3</name>
    <name type="synonym">FMP48</name>
    <name type="ordered locus">KLLA0F01144g</name>
</gene>
<name>GEP3_KLULA</name>
<comment type="function">
    <text evidence="1">May be involved in the mitochondrial lipid metabolism.</text>
</comment>
<comment type="subcellular location">
    <subcellularLocation>
        <location evidence="1">Mitochondrion</location>
    </subcellularLocation>
</comment>
<comment type="similarity">
    <text evidence="3">Belongs to the TRAFAC class YlqF/YawG GTPase family. GEP3 subfamily.</text>
</comment>
<comment type="sequence caution" evidence="4">
    <conflict type="erroneous initiation">
        <sequence resource="EMBL-CDS" id="CAG97838"/>
    </conflict>
    <text>Extended N-terminus.</text>
</comment>
<accession>Q6CLQ8</accession>
<proteinExistence type="inferred from homology"/>
<organism>
    <name type="scientific">Kluyveromyces lactis (strain ATCC 8585 / CBS 2359 / DSM 70799 / NBRC 1267 / NRRL Y-1140 / WM37)</name>
    <name type="common">Yeast</name>
    <name type="synonym">Candida sphaerica</name>
    <dbReference type="NCBI Taxonomy" id="284590"/>
    <lineage>
        <taxon>Eukaryota</taxon>
        <taxon>Fungi</taxon>
        <taxon>Dikarya</taxon>
        <taxon>Ascomycota</taxon>
        <taxon>Saccharomycotina</taxon>
        <taxon>Saccharomycetes</taxon>
        <taxon>Saccharomycetales</taxon>
        <taxon>Saccharomycetaceae</taxon>
        <taxon>Kluyveromyces</taxon>
    </lineage>
</organism>
<dbReference type="EMBL" id="CR382126">
    <property type="protein sequence ID" value="CAG97838.1"/>
    <property type="status" value="ALT_INIT"/>
    <property type="molecule type" value="Genomic_DNA"/>
</dbReference>
<dbReference type="RefSeq" id="XP_455131.1">
    <property type="nucleotide sequence ID" value="XM_455131.1"/>
</dbReference>
<dbReference type="SMR" id="Q6CLQ8"/>
<dbReference type="FunCoup" id="Q6CLQ8">
    <property type="interactions" value="104"/>
</dbReference>
<dbReference type="STRING" id="284590.Q6CLQ8"/>
<dbReference type="PaxDb" id="284590-Q6CLQ8"/>
<dbReference type="KEGG" id="kla:KLLA0_F01144g"/>
<dbReference type="eggNOG" id="ENOG502S0UP">
    <property type="taxonomic scope" value="Eukaryota"/>
</dbReference>
<dbReference type="HOGENOM" id="CLU_025792_1_0_1"/>
<dbReference type="InParanoid" id="Q6CLQ8"/>
<dbReference type="Proteomes" id="UP000000598">
    <property type="component" value="Chromosome F"/>
</dbReference>
<dbReference type="GO" id="GO:0005739">
    <property type="term" value="C:mitochondrion"/>
    <property type="evidence" value="ECO:0007669"/>
    <property type="project" value="UniProtKB-SubCell"/>
</dbReference>
<dbReference type="GO" id="GO:0005525">
    <property type="term" value="F:GTP binding"/>
    <property type="evidence" value="ECO:0007669"/>
    <property type="project" value="InterPro"/>
</dbReference>
<dbReference type="CDD" id="cd01855">
    <property type="entry name" value="YqeH"/>
    <property type="match status" value="1"/>
</dbReference>
<dbReference type="Gene3D" id="3.40.50.300">
    <property type="entry name" value="P-loop containing nucleotide triphosphate hydrolases"/>
    <property type="match status" value="1"/>
</dbReference>
<dbReference type="InterPro" id="IPR030378">
    <property type="entry name" value="G_CP_dom"/>
</dbReference>
<dbReference type="InterPro" id="IPR050896">
    <property type="entry name" value="Mito_lipid_metab_GTPase"/>
</dbReference>
<dbReference type="InterPro" id="IPR027417">
    <property type="entry name" value="P-loop_NTPase"/>
</dbReference>
<dbReference type="PANTHER" id="PTHR46434">
    <property type="entry name" value="GENETIC INTERACTOR OF PROHIBITINS 3, MITOCHONDRIAL"/>
    <property type="match status" value="1"/>
</dbReference>
<dbReference type="PANTHER" id="PTHR46434:SF1">
    <property type="entry name" value="GENETIC INTERACTOR OF PROHIBITINS 3, MITOCHONDRIAL"/>
    <property type="match status" value="1"/>
</dbReference>
<dbReference type="SUPFAM" id="SSF52540">
    <property type="entry name" value="P-loop containing nucleoside triphosphate hydrolases"/>
    <property type="match status" value="1"/>
</dbReference>
<dbReference type="PROSITE" id="PS51721">
    <property type="entry name" value="G_CP"/>
    <property type="match status" value="1"/>
</dbReference>